<organism>
    <name type="scientific">Bacillus subtilis (strain 168)</name>
    <dbReference type="NCBI Taxonomy" id="224308"/>
    <lineage>
        <taxon>Bacteria</taxon>
        <taxon>Bacillati</taxon>
        <taxon>Bacillota</taxon>
        <taxon>Bacilli</taxon>
        <taxon>Bacillales</taxon>
        <taxon>Bacillaceae</taxon>
        <taxon>Bacillus</taxon>
    </lineage>
</organism>
<comment type="function">
    <text evidence="1">With S4 and S5 plays an important role in translational accuracy.</text>
</comment>
<comment type="function">
    <text evidence="1">Interacts with and stabilizes bases of the 16S rRNA that are involved in tRNA selection in the A site and with the mRNA backbone. Located at the interface of the 30S and 50S subunits, it traverses the body of the 30S subunit contacting proteins on the other side and probably holding the rRNA structure together. The combined cluster of proteins S8, S12 and S17 appears to hold together the shoulder and platform of the 30S subunit (By similarity).</text>
</comment>
<comment type="subunit">
    <text evidence="1 5 6">Part of the 30S ribosomal subunit (PubMed:30126986). Contacts proteins S8 and S17. May interact with IF1 in the 30S initiation complex (By similarity). Interacts with BrxC (PubMed:33722570).</text>
</comment>
<comment type="miscellaneous">
    <text evidence="8">Many streptomycin resistant B.subtilis with mutations in this protein produce increased quantities of a natural (but uncharacterized) antibiotic.</text>
</comment>
<comment type="miscellaneous">
    <text evidence="11">A number of substitutions and deletions can promote streptomycin resistance, dependence or pseudodependence; all but one of these (K55R) are associated with hyperaccurate translation.</text>
</comment>
<comment type="similarity">
    <text evidence="11">Belongs to the universal ribosomal protein uS12 family.</text>
</comment>
<comment type="caution">
    <text evidence="11">The enzyme that would modify Asp-102 to 3-methylthioaspartic acid has not been found in the proteome of this organism, and that modification does not occur.</text>
</comment>
<evidence type="ECO:0000255" key="1">
    <source>
        <dbReference type="HAMAP-Rule" id="MF_00403"/>
    </source>
</evidence>
<evidence type="ECO:0000256" key="2">
    <source>
        <dbReference type="SAM" id="MobiDB-lite"/>
    </source>
</evidence>
<evidence type="ECO:0000269" key="3">
    <source>
    </source>
</evidence>
<evidence type="ECO:0000269" key="4">
    <source>
    </source>
</evidence>
<evidence type="ECO:0000269" key="5">
    <source>
    </source>
</evidence>
<evidence type="ECO:0000269" key="6">
    <source>
    </source>
</evidence>
<evidence type="ECO:0000269" key="7">
    <source>
    </source>
</evidence>
<evidence type="ECO:0000269" key="8">
    <source>
    </source>
</evidence>
<evidence type="ECO:0000269" key="9">
    <source ref="3"/>
</evidence>
<evidence type="ECO:0000303" key="10">
    <source>
    </source>
</evidence>
<evidence type="ECO:0000305" key="11"/>
<evidence type="ECO:0007744" key="12">
    <source>
        <dbReference type="PDB" id="6HA1"/>
    </source>
</evidence>
<evidence type="ECO:0007744" key="13">
    <source>
        <dbReference type="PDB" id="6HA8"/>
    </source>
</evidence>
<evidence type="ECO:0007829" key="14">
    <source>
        <dbReference type="PDB" id="8CDU"/>
    </source>
</evidence>
<gene>
    <name type="primary">rpsL</name>
    <name type="synonym">fun</name>
    <name type="synonym">strA</name>
    <name type="ordered locus">BSU01100</name>
</gene>
<name>RS12_BACSU</name>
<proteinExistence type="evidence at protein level"/>
<reference key="1">
    <citation type="journal article" date="1996" name="Microbiology">
        <title>Sequence analysis of a 50 kb region between spo0H and rrnH on the Bacillus subtilis chromosome.</title>
        <authorList>
            <person name="Yasumoto K."/>
            <person name="Liu H."/>
            <person name="Jeong S.M."/>
            <person name="Ohashi Y."/>
            <person name="Kakinuma S."/>
            <person name="Tanaka K."/>
            <person name="Kawamura F."/>
            <person name="Yoshikawa H."/>
            <person name="Takahashi H."/>
        </authorList>
    </citation>
    <scope>NUCLEOTIDE SEQUENCE [GENOMIC DNA]</scope>
    <source>
        <strain>168</strain>
    </source>
</reference>
<reference key="2">
    <citation type="journal article" date="1997" name="Nature">
        <title>The complete genome sequence of the Gram-positive bacterium Bacillus subtilis.</title>
        <authorList>
            <person name="Kunst F."/>
            <person name="Ogasawara N."/>
            <person name="Moszer I."/>
            <person name="Albertini A.M."/>
            <person name="Alloni G."/>
            <person name="Azevedo V."/>
            <person name="Bertero M.G."/>
            <person name="Bessieres P."/>
            <person name="Bolotin A."/>
            <person name="Borchert S."/>
            <person name="Borriss R."/>
            <person name="Boursier L."/>
            <person name="Brans A."/>
            <person name="Braun M."/>
            <person name="Brignell S.C."/>
            <person name="Bron S."/>
            <person name="Brouillet S."/>
            <person name="Bruschi C.V."/>
            <person name="Caldwell B."/>
            <person name="Capuano V."/>
            <person name="Carter N.M."/>
            <person name="Choi S.-K."/>
            <person name="Codani J.-J."/>
            <person name="Connerton I.F."/>
            <person name="Cummings N.J."/>
            <person name="Daniel R.A."/>
            <person name="Denizot F."/>
            <person name="Devine K.M."/>
            <person name="Duesterhoeft A."/>
            <person name="Ehrlich S.D."/>
            <person name="Emmerson P.T."/>
            <person name="Entian K.-D."/>
            <person name="Errington J."/>
            <person name="Fabret C."/>
            <person name="Ferrari E."/>
            <person name="Foulger D."/>
            <person name="Fritz C."/>
            <person name="Fujita M."/>
            <person name="Fujita Y."/>
            <person name="Fuma S."/>
            <person name="Galizzi A."/>
            <person name="Galleron N."/>
            <person name="Ghim S.-Y."/>
            <person name="Glaser P."/>
            <person name="Goffeau A."/>
            <person name="Golightly E.J."/>
            <person name="Grandi G."/>
            <person name="Guiseppi G."/>
            <person name="Guy B.J."/>
            <person name="Haga K."/>
            <person name="Haiech J."/>
            <person name="Harwood C.R."/>
            <person name="Henaut A."/>
            <person name="Hilbert H."/>
            <person name="Holsappel S."/>
            <person name="Hosono S."/>
            <person name="Hullo M.-F."/>
            <person name="Itaya M."/>
            <person name="Jones L.-M."/>
            <person name="Joris B."/>
            <person name="Karamata D."/>
            <person name="Kasahara Y."/>
            <person name="Klaerr-Blanchard M."/>
            <person name="Klein C."/>
            <person name="Kobayashi Y."/>
            <person name="Koetter P."/>
            <person name="Koningstein G."/>
            <person name="Krogh S."/>
            <person name="Kumano M."/>
            <person name="Kurita K."/>
            <person name="Lapidus A."/>
            <person name="Lardinois S."/>
            <person name="Lauber J."/>
            <person name="Lazarevic V."/>
            <person name="Lee S.-M."/>
            <person name="Levine A."/>
            <person name="Liu H."/>
            <person name="Masuda S."/>
            <person name="Mauel C."/>
            <person name="Medigue C."/>
            <person name="Medina N."/>
            <person name="Mellado R.P."/>
            <person name="Mizuno M."/>
            <person name="Moestl D."/>
            <person name="Nakai S."/>
            <person name="Noback M."/>
            <person name="Noone D."/>
            <person name="O'Reilly M."/>
            <person name="Ogawa K."/>
            <person name="Ogiwara A."/>
            <person name="Oudega B."/>
            <person name="Park S.-H."/>
            <person name="Parro V."/>
            <person name="Pohl T.M."/>
            <person name="Portetelle D."/>
            <person name="Porwollik S."/>
            <person name="Prescott A.M."/>
            <person name="Presecan E."/>
            <person name="Pujic P."/>
            <person name="Purnelle B."/>
            <person name="Rapoport G."/>
            <person name="Rey M."/>
            <person name="Reynolds S."/>
            <person name="Rieger M."/>
            <person name="Rivolta C."/>
            <person name="Rocha E."/>
            <person name="Roche B."/>
            <person name="Rose M."/>
            <person name="Sadaie Y."/>
            <person name="Sato T."/>
            <person name="Scanlan E."/>
            <person name="Schleich S."/>
            <person name="Schroeter R."/>
            <person name="Scoffone F."/>
            <person name="Sekiguchi J."/>
            <person name="Sekowska A."/>
            <person name="Seror S.J."/>
            <person name="Serror P."/>
            <person name="Shin B.-S."/>
            <person name="Soldo B."/>
            <person name="Sorokin A."/>
            <person name="Tacconi E."/>
            <person name="Takagi T."/>
            <person name="Takahashi H."/>
            <person name="Takemaru K."/>
            <person name="Takeuchi M."/>
            <person name="Tamakoshi A."/>
            <person name="Tanaka T."/>
            <person name="Terpstra P."/>
            <person name="Tognoni A."/>
            <person name="Tosato V."/>
            <person name="Uchiyama S."/>
            <person name="Vandenbol M."/>
            <person name="Vannier F."/>
            <person name="Vassarotti A."/>
            <person name="Viari A."/>
            <person name="Wambutt R."/>
            <person name="Wedler E."/>
            <person name="Wedler H."/>
            <person name="Weitzenegger T."/>
            <person name="Winters P."/>
            <person name="Wipat A."/>
            <person name="Yamamoto H."/>
            <person name="Yamane K."/>
            <person name="Yasumoto K."/>
            <person name="Yata K."/>
            <person name="Yoshida K."/>
            <person name="Yoshikawa H.-F."/>
            <person name="Zumstein E."/>
            <person name="Yoshikawa H."/>
            <person name="Danchin A."/>
        </authorList>
    </citation>
    <scope>NUCLEOTIDE SEQUENCE [LARGE SCALE GENOMIC DNA]</scope>
    <source>
        <strain>168</strain>
    </source>
</reference>
<reference key="3">
    <citation type="unpublished observations" date="2002-08">
        <authorList>
            <person name="Ochi K."/>
            <person name="Takashi I."/>
            <person name="Forbes A."/>
            <person name="Kelleher N.L."/>
            <person name="Garavelli J.S."/>
        </authorList>
    </citation>
    <scope>SEQUENCE REVISION TO 102; 105 AND 128</scope>
    <scope>LACK OF MODIFICATION</scope>
    <source>
        <strain>168</strain>
    </source>
</reference>
<reference key="4">
    <citation type="journal article" date="2006" name="J. Bacteriol.">
        <title>Effects of streptomycin resistance mutations on posttranslational modification of ribosomal protein S12.</title>
        <authorList>
            <person name="Carr J.F."/>
            <person name="Hamburg D.M."/>
            <person name="Gregory S.T."/>
            <person name="Limbach P.A."/>
            <person name="Dahlberg A.E."/>
        </authorList>
    </citation>
    <scope>SEQUENCE REVISION TO 102 AND 105</scope>
    <source>
        <strain>168 / BGSC1A1</strain>
        <strain>ATCC 21332 / IAM 1213</strain>
    </source>
</reference>
<reference key="5">
    <citation type="journal article" date="2009" name="J. Proteome Res.">
        <title>B. subtilis ribosomal proteins: structural homology and post-translational modifications.</title>
        <authorList>
            <person name="Lauber M.A."/>
            <person name="Running W.E."/>
            <person name="Reilly J.P."/>
        </authorList>
    </citation>
    <scope>SEQUENCE REVISION TO 102; 105 AND 128</scope>
    <scope>LACK OF MODIFICATION</scope>
    <source>
        <strain>168</strain>
    </source>
</reference>
<reference key="6">
    <citation type="journal article" date="2009" name="Microbiology">
        <title>From a consortium sequence to a unified sequence: the Bacillus subtilis 168 reference genome a decade later.</title>
        <authorList>
            <person name="Barbe V."/>
            <person name="Cruveiller S."/>
            <person name="Kunst F."/>
            <person name="Lenoble P."/>
            <person name="Meurice G."/>
            <person name="Sekowska A."/>
            <person name="Vallenet D."/>
            <person name="Wang T."/>
            <person name="Moszer I."/>
            <person name="Medigue C."/>
            <person name="Danchin A."/>
        </authorList>
    </citation>
    <scope>SEQUENCE REVISION TO 102; 105 AND 128</scope>
</reference>
<reference key="7">
    <citation type="journal article" date="1995" name="J. Biol. Chem.">
        <title>Genetic and transcriptional organization of the region encoding the beta subunit of Bacillus subtilis RNA polymerase.</title>
        <authorList>
            <person name="Boor K.J."/>
            <person name="Duncan M.L."/>
            <person name="Price C.W."/>
        </authorList>
    </citation>
    <scope>NUCLEOTIDE SEQUENCE [GENOMIC DNA] OF 1-32</scope>
    <source>
        <strain>168 / Marburg / ATCC 6051 / DSM 10 / JCM 1465 / NBRC 13719 / NCIMB 3610 / NRRL NRS-744 / VKM B-501</strain>
    </source>
</reference>
<reference key="8">
    <citation type="journal article" date="1982" name="Mol. Gen. Genet.">
        <title>Purification and characterization of 30S ribosomal proteins from Bacillus subtilis: correlation to Escherichia coli 30S proteins.</title>
        <authorList>
            <person name="Higo K."/>
            <person name="Otaka E."/>
            <person name="Osawa S."/>
        </authorList>
    </citation>
    <scope>PROTEIN SEQUENCE OF 2-21</scope>
</reference>
<reference key="9">
    <citation type="journal article" date="1998" name="Antimicrob. Agents Chemother.">
        <title>Acquisition of certain streptomycin-resistant (str) mutations enhances antibiotic production in bacteria.</title>
        <authorList>
            <person name="Hosoya Y."/>
            <person name="Okamoto S."/>
            <person name="Muramatsu H."/>
            <person name="Ochi K."/>
        </authorList>
    </citation>
    <scope>VARIANT RPSL4 ILE-56</scope>
    <scope>ANTIBIOTIC PRODUCTION</scope>
    <scope>MUTAGENESIS OF LYS-56</scope>
    <source>
        <strain>168</strain>
    </source>
</reference>
<reference key="10">
    <citation type="journal article" date="2001" name="J. Bacteriol.">
        <title>Construction of an in vivo nonsense readthrough assay system and functional analysis of ribosomal proteins S12, S4, and S5 in Bacillus subtilis.</title>
        <authorList>
            <person name="Inaoka T."/>
            <person name="Kasai K."/>
            <person name="Ochi K."/>
        </authorList>
    </citation>
    <scope>CHARACTERIZATION</scope>
    <scope>MUTAGENESIS</scope>
    <scope>VARIANT RPSL4 ILE-56</scope>
    <scope>VARIANT RPSL1 ARG-56</scope>
    <source>
        <strain>168</strain>
    </source>
</reference>
<reference key="11">
    <citation type="journal article" date="2021" name="Redox Biol.">
        <title>The Bacillus subtilis monothiol bacilliredoxin BrxC (YtxJ) and the Bdr (YpdA) disulfide reductase reduce S-bacillithiolated proteins.</title>
        <authorList>
            <person name="Gaballa A."/>
            <person name="Su T.T."/>
            <person name="Helmann J.D."/>
        </authorList>
    </citation>
    <scope>INTERACTION WITH BRXC</scope>
    <scope>IDENTIFICATION BY MASS SPECTROMETRY</scope>
    <source>
        <strain evidence="10">168 / CU1065</strain>
    </source>
</reference>
<reference evidence="12 13" key="12">
    <citation type="journal article" date="2018" name="Proc. Natl. Acad. Sci. U.S.A.">
        <title>Structural basis for antibiotic resistance mediated by the Bacillus subtilis ABCF ATPase VmlR.</title>
        <authorList>
            <person name="Crowe-McAuliffe C."/>
            <person name="Graf M."/>
            <person name="Huter P."/>
            <person name="Takada H."/>
            <person name="Abdelshahid M."/>
            <person name="Novacek J."/>
            <person name="Murina V."/>
            <person name="Atkinson G.C."/>
            <person name="Hauryliuk V."/>
            <person name="Wilson D.N."/>
        </authorList>
    </citation>
    <scope>STRUCTURE BY ELECTRON MICROSCOPY (3.10 ANGSTROMS) OF 1-138 WITH AND WITHOUT VIRGINIAMYCIN M</scope>
    <scope>SUBUNIT</scope>
</reference>
<sequence length="138" mass="15216">MPTINQLIRKGRVSKVENSKSPALNKGYNSFKKEHTNVSSPQKRGVCTRVGTMTPKKPNSALRKYARVRLTNGIEVTAYIPGIGHNLQEHSVVLIRGGRVKDLPGVRYHIVRGALDTAGVENRAQGRSKYGTKKPKAK</sequence>
<accession>P21472</accession>
<keyword id="KW-0002">3D-structure</keyword>
<keyword id="KW-0046">Antibiotic resistance</keyword>
<keyword id="KW-0903">Direct protein sequencing</keyword>
<keyword id="KW-1185">Reference proteome</keyword>
<keyword id="KW-0687">Ribonucleoprotein</keyword>
<keyword id="KW-0689">Ribosomal protein</keyword>
<keyword id="KW-0694">RNA-binding</keyword>
<keyword id="KW-0699">rRNA-binding</keyword>
<keyword id="KW-0820">tRNA-binding</keyword>
<protein>
    <recommendedName>
        <fullName evidence="11">Small ribosomal subunit protein uS12</fullName>
    </recommendedName>
    <alternativeName>
        <fullName>30S ribosomal protein S12</fullName>
        <shortName>BS12</shortName>
    </alternativeName>
</protein>
<dbReference type="EMBL" id="D64127">
    <property type="protein sequence ID" value="BAA11001.1"/>
    <property type="molecule type" value="Genomic_DNA"/>
</dbReference>
<dbReference type="EMBL" id="AL009126">
    <property type="protein sequence ID" value="CAB11886.2"/>
    <property type="molecule type" value="Genomic_DNA"/>
</dbReference>
<dbReference type="EMBL" id="L43593">
    <property type="protein sequence ID" value="AAB59114.1"/>
    <property type="molecule type" value="Genomic_DNA"/>
</dbReference>
<dbReference type="PIR" id="C69700">
    <property type="entry name" value="C69700"/>
</dbReference>
<dbReference type="RefSeq" id="NP_387991.2">
    <property type="nucleotide sequence ID" value="NC_000964.3"/>
</dbReference>
<dbReference type="RefSeq" id="WP_003225781.1">
    <property type="nucleotide sequence ID" value="NZ_OZ025638.1"/>
</dbReference>
<dbReference type="PDB" id="3J9W">
    <property type="method" value="EM"/>
    <property type="resolution" value="3.90 A"/>
    <property type="chains" value="AL=1-138"/>
</dbReference>
<dbReference type="PDB" id="5NJT">
    <property type="method" value="EM"/>
    <property type="resolution" value="3.80 A"/>
    <property type="chains" value="L=2-138"/>
</dbReference>
<dbReference type="PDB" id="6HA1">
    <property type="method" value="EM"/>
    <property type="resolution" value="3.10 A"/>
    <property type="chains" value="l=1-138"/>
</dbReference>
<dbReference type="PDB" id="6HA8">
    <property type="method" value="EM"/>
    <property type="resolution" value="3.50 A"/>
    <property type="chains" value="l=1-138"/>
</dbReference>
<dbReference type="PDB" id="6HTQ">
    <property type="method" value="EM"/>
    <property type="resolution" value="4.50 A"/>
    <property type="chains" value="l=2-137"/>
</dbReference>
<dbReference type="PDB" id="7O5B">
    <property type="method" value="EM"/>
    <property type="resolution" value="3.33 A"/>
    <property type="chains" value="L=1-138"/>
</dbReference>
<dbReference type="PDB" id="7QGU">
    <property type="method" value="EM"/>
    <property type="resolution" value="4.75 A"/>
    <property type="chains" value="q=1-138"/>
</dbReference>
<dbReference type="PDB" id="7QH4">
    <property type="method" value="EM"/>
    <property type="resolution" value="5.45 A"/>
    <property type="chains" value="p=1-138"/>
</dbReference>
<dbReference type="PDB" id="7QV1">
    <property type="method" value="EM"/>
    <property type="resolution" value="3.50 A"/>
    <property type="chains" value="l=1-138"/>
</dbReference>
<dbReference type="PDB" id="7QV2">
    <property type="method" value="EM"/>
    <property type="resolution" value="3.50 A"/>
    <property type="chains" value="l=1-138"/>
</dbReference>
<dbReference type="PDB" id="7QV3">
    <property type="method" value="EM"/>
    <property type="resolution" value="5.14 A"/>
    <property type="chains" value="l=1-138"/>
</dbReference>
<dbReference type="PDB" id="8BUU">
    <property type="method" value="EM"/>
    <property type="resolution" value="2.90 A"/>
    <property type="chains" value="l=1-138"/>
</dbReference>
<dbReference type="PDB" id="8CDU">
    <property type="method" value="EM"/>
    <property type="resolution" value="3.10 A"/>
    <property type="chains" value="L=1-138"/>
</dbReference>
<dbReference type="PDB" id="8CDV">
    <property type="method" value="EM"/>
    <property type="resolution" value="4.73 A"/>
    <property type="chains" value="L=1-138"/>
</dbReference>
<dbReference type="PDB" id="8CEC">
    <property type="method" value="EM"/>
    <property type="resolution" value="3.57 A"/>
    <property type="chains" value="L=1-138"/>
</dbReference>
<dbReference type="PDB" id="8CED">
    <property type="method" value="EM"/>
    <property type="resolution" value="4.15 A"/>
    <property type="chains" value="L=1-138"/>
</dbReference>
<dbReference type="PDB" id="8CEE">
    <property type="method" value="EM"/>
    <property type="resolution" value="3.70 A"/>
    <property type="chains" value="L=1-138"/>
</dbReference>
<dbReference type="PDB" id="8QCQ">
    <property type="method" value="EM"/>
    <property type="resolution" value="2.30 A"/>
    <property type="chains" value="l=1-138"/>
</dbReference>
<dbReference type="PDB" id="8QPP">
    <property type="method" value="EM"/>
    <property type="resolution" value="3.40 A"/>
    <property type="chains" value="L=1-138"/>
</dbReference>
<dbReference type="PDB" id="8R55">
    <property type="method" value="EM"/>
    <property type="resolution" value="3.57 A"/>
    <property type="chains" value="L=1-138"/>
</dbReference>
<dbReference type="PDBsum" id="3J9W"/>
<dbReference type="PDBsum" id="5NJT"/>
<dbReference type="PDBsum" id="6HA1"/>
<dbReference type="PDBsum" id="6HA8"/>
<dbReference type="PDBsum" id="6HTQ"/>
<dbReference type="PDBsum" id="7O5B"/>
<dbReference type="PDBsum" id="7QGU"/>
<dbReference type="PDBsum" id="7QH4"/>
<dbReference type="PDBsum" id="7QV1"/>
<dbReference type="PDBsum" id="7QV2"/>
<dbReference type="PDBsum" id="7QV3"/>
<dbReference type="PDBsum" id="8BUU"/>
<dbReference type="PDBsum" id="8CDU"/>
<dbReference type="PDBsum" id="8CDV"/>
<dbReference type="PDBsum" id="8CEC"/>
<dbReference type="PDBsum" id="8CED"/>
<dbReference type="PDBsum" id="8CEE"/>
<dbReference type="PDBsum" id="8QCQ"/>
<dbReference type="PDBsum" id="8QPP"/>
<dbReference type="PDBsum" id="8R55"/>
<dbReference type="EMDB" id="EMD-0176"/>
<dbReference type="EMDB" id="EMD-0177"/>
<dbReference type="EMDB" id="EMD-0270"/>
<dbReference type="EMDB" id="EMD-12734"/>
<dbReference type="EMDB" id="EMD-14157"/>
<dbReference type="EMDB" id="EMD-14158"/>
<dbReference type="EMDB" id="EMD-14159"/>
<dbReference type="EMDB" id="EMD-16246"/>
<dbReference type="EMDB" id="EMD-16595"/>
<dbReference type="EMDB" id="EMD-16596"/>
<dbReference type="EMDB" id="EMD-16605"/>
<dbReference type="EMDB" id="EMD-16606"/>
<dbReference type="EMDB" id="EMD-16607"/>
<dbReference type="EMDB" id="EMD-18332"/>
<dbReference type="EMDB" id="EMD-3656"/>
<dbReference type="SMR" id="P21472"/>
<dbReference type="FunCoup" id="P21472">
    <property type="interactions" value="647"/>
</dbReference>
<dbReference type="STRING" id="224308.BSU01100"/>
<dbReference type="PaxDb" id="224308-BSU01100"/>
<dbReference type="EnsemblBacteria" id="CAB11886">
    <property type="protein sequence ID" value="CAB11886"/>
    <property type="gene ID" value="BSU_01100"/>
</dbReference>
<dbReference type="GeneID" id="86875492"/>
<dbReference type="GeneID" id="936616"/>
<dbReference type="KEGG" id="bsu:BSU01100"/>
<dbReference type="PATRIC" id="fig|224308.179.peg.113"/>
<dbReference type="eggNOG" id="COG0048">
    <property type="taxonomic scope" value="Bacteria"/>
</dbReference>
<dbReference type="InParanoid" id="P21472"/>
<dbReference type="OrthoDB" id="9802366at2"/>
<dbReference type="PhylomeDB" id="P21472"/>
<dbReference type="BioCyc" id="BSUB:BSU01100-MONOMER"/>
<dbReference type="PRO" id="PR:P21472"/>
<dbReference type="Proteomes" id="UP000001570">
    <property type="component" value="Chromosome"/>
</dbReference>
<dbReference type="GO" id="GO:0005840">
    <property type="term" value="C:ribosome"/>
    <property type="evidence" value="ECO:0000318"/>
    <property type="project" value="GO_Central"/>
</dbReference>
<dbReference type="GO" id="GO:0015935">
    <property type="term" value="C:small ribosomal subunit"/>
    <property type="evidence" value="ECO:0007669"/>
    <property type="project" value="InterPro"/>
</dbReference>
<dbReference type="GO" id="GO:0019843">
    <property type="term" value="F:rRNA binding"/>
    <property type="evidence" value="ECO:0007669"/>
    <property type="project" value="UniProtKB-UniRule"/>
</dbReference>
<dbReference type="GO" id="GO:0003735">
    <property type="term" value="F:structural constituent of ribosome"/>
    <property type="evidence" value="ECO:0000318"/>
    <property type="project" value="GO_Central"/>
</dbReference>
<dbReference type="GO" id="GO:0000049">
    <property type="term" value="F:tRNA binding"/>
    <property type="evidence" value="ECO:0007669"/>
    <property type="project" value="UniProtKB-UniRule"/>
</dbReference>
<dbReference type="GO" id="GO:0046677">
    <property type="term" value="P:response to antibiotic"/>
    <property type="evidence" value="ECO:0007669"/>
    <property type="project" value="UniProtKB-KW"/>
</dbReference>
<dbReference type="GO" id="GO:0006412">
    <property type="term" value="P:translation"/>
    <property type="evidence" value="ECO:0000318"/>
    <property type="project" value="GO_Central"/>
</dbReference>
<dbReference type="CDD" id="cd03368">
    <property type="entry name" value="Ribosomal_S12"/>
    <property type="match status" value="1"/>
</dbReference>
<dbReference type="FunFam" id="2.40.50.140:FF:000001">
    <property type="entry name" value="30S ribosomal protein S12"/>
    <property type="match status" value="1"/>
</dbReference>
<dbReference type="Gene3D" id="2.40.50.140">
    <property type="entry name" value="Nucleic acid-binding proteins"/>
    <property type="match status" value="1"/>
</dbReference>
<dbReference type="HAMAP" id="MF_00403_B">
    <property type="entry name" value="Ribosomal_uS12_B"/>
    <property type="match status" value="1"/>
</dbReference>
<dbReference type="InterPro" id="IPR012340">
    <property type="entry name" value="NA-bd_OB-fold"/>
</dbReference>
<dbReference type="InterPro" id="IPR006032">
    <property type="entry name" value="Ribosomal_uS12"/>
</dbReference>
<dbReference type="InterPro" id="IPR005679">
    <property type="entry name" value="Ribosomal_uS12_bac"/>
</dbReference>
<dbReference type="NCBIfam" id="TIGR00981">
    <property type="entry name" value="rpsL_bact"/>
    <property type="match status" value="1"/>
</dbReference>
<dbReference type="PANTHER" id="PTHR11652">
    <property type="entry name" value="30S RIBOSOMAL PROTEIN S12 FAMILY MEMBER"/>
    <property type="match status" value="1"/>
</dbReference>
<dbReference type="Pfam" id="PF00164">
    <property type="entry name" value="Ribosom_S12_S23"/>
    <property type="match status" value="1"/>
</dbReference>
<dbReference type="PRINTS" id="PR01034">
    <property type="entry name" value="RIBOSOMALS12"/>
</dbReference>
<dbReference type="SUPFAM" id="SSF50249">
    <property type="entry name" value="Nucleic acid-binding proteins"/>
    <property type="match status" value="1"/>
</dbReference>
<dbReference type="PROSITE" id="PS00055">
    <property type="entry name" value="RIBOSOMAL_S12"/>
    <property type="match status" value="1"/>
</dbReference>
<feature type="initiator methionine" description="Removed" evidence="7">
    <location>
        <position position="1"/>
    </location>
</feature>
<feature type="chain" id="PRO_0000146178" description="Small ribosomal subunit protein uS12">
    <location>
        <begin position="2"/>
        <end position="138"/>
    </location>
</feature>
<feature type="region of interest" description="Disordered" evidence="2">
    <location>
        <begin position="33"/>
        <end position="55"/>
    </location>
</feature>
<feature type="site" description="Not modified" evidence="4 9">
    <location>
        <position position="102"/>
    </location>
</feature>
<feature type="sequence variant" description="In RPSL4; STRA1, confers streptomycin resistance and hyperaccurate translation, has no effect on natural antibiotic production." evidence="3 8">
    <original>K</original>
    <variation>I</variation>
    <location>
        <position position="56"/>
    </location>
</feature>
<feature type="sequence variant" description="In RPSL1; KO-267, confers streptomycin resistance but not hyperaccurate translation, increases natural antibiotic production 10-fold." evidence="3">
    <original>K</original>
    <variation>R</variation>
    <location>
        <position position="56"/>
    </location>
</feature>
<feature type="mutagenesis site" description="Confers streptomycin resistance and very poor growth in rich medium." evidence="3">
    <original>K</original>
    <variation>D</variation>
    <location>
        <position position="56"/>
    </location>
</feature>
<feature type="sequence conflict" description="In Ref. 1; BAA11001." evidence="11" ref="1">
    <original>D</original>
    <variation>N</variation>
    <location>
        <position position="102"/>
    </location>
</feature>
<feature type="sequence conflict" description="In Ref. 1; BAA11001." evidence="11" ref="1">
    <original>G</original>
    <variation>R</variation>
    <location>
        <position position="105"/>
    </location>
</feature>
<feature type="sequence conflict" description="In Ref. 1; BAA11001." evidence="11" ref="1">
    <original>S</original>
    <variation>P</variation>
    <location>
        <position position="128"/>
    </location>
</feature>
<feature type="helix" evidence="14">
    <location>
        <begin position="4"/>
        <end position="9"/>
    </location>
</feature>
<feature type="turn" evidence="14">
    <location>
        <begin position="22"/>
        <end position="25"/>
    </location>
</feature>
<feature type="turn" evidence="14">
    <location>
        <begin position="30"/>
        <end position="33"/>
    </location>
</feature>
<feature type="strand" evidence="14">
    <location>
        <begin position="43"/>
        <end position="53"/>
    </location>
</feature>
<feature type="strand" evidence="14">
    <location>
        <begin position="63"/>
        <end position="70"/>
    </location>
</feature>
<feature type="strand" evidence="14">
    <location>
        <begin position="75"/>
        <end position="79"/>
    </location>
</feature>
<feature type="strand" evidence="14">
    <location>
        <begin position="92"/>
        <end position="97"/>
    </location>
</feature>
<feature type="strand" evidence="14">
    <location>
        <begin position="106"/>
        <end position="115"/>
    </location>
</feature>
<feature type="helix" evidence="14">
    <location>
        <begin position="128"/>
        <end position="130"/>
    </location>
</feature>